<sequence>MARQSKKKGRPVSGWIILDKPKGMRSTEAVSQIKYLFHAQKVGHAGTLDPLASGLLPIALGEATKTVPYVMQGTKTYRFHIAWGEERSTDDLEGEITHTSSKRPTREEILALLPQYTGVILQTPPQFSAIKIAGNRAYDLAREGEVVEIPPRQVEIETFKLIEMITKDHSIFEITCGKGTYVRSLARDMGRDLGCYAHIADLRRIAVAPFCENDLITWDELKAVELDKSAKNEKDAPFERNFIKLDELLIETISALECLSHYTLSQTQAQQVMKGNTVLLYHHDVPLDEDEVCVLYQDQLLAIGALEKNQFKPKRLFTI</sequence>
<protein>
    <recommendedName>
        <fullName evidence="1">tRNA pseudouridine synthase B</fullName>
        <ecNumber evidence="1">5.4.99.25</ecNumber>
    </recommendedName>
    <alternativeName>
        <fullName evidence="1">tRNA pseudouridine(55) synthase</fullName>
        <shortName evidence="1">Psi55 synthase</shortName>
    </alternativeName>
    <alternativeName>
        <fullName evidence="1">tRNA pseudouridylate synthase</fullName>
    </alternativeName>
    <alternativeName>
        <fullName evidence="1">tRNA-uridine isomerase</fullName>
    </alternativeName>
</protein>
<comment type="function">
    <text evidence="1">Responsible for synthesis of pseudouridine from uracil-55 in the psi GC loop of transfer RNAs.</text>
</comment>
<comment type="catalytic activity">
    <reaction evidence="1">
        <text>uridine(55) in tRNA = pseudouridine(55) in tRNA</text>
        <dbReference type="Rhea" id="RHEA:42532"/>
        <dbReference type="Rhea" id="RHEA-COMP:10101"/>
        <dbReference type="Rhea" id="RHEA-COMP:10102"/>
        <dbReference type="ChEBI" id="CHEBI:65314"/>
        <dbReference type="ChEBI" id="CHEBI:65315"/>
        <dbReference type="EC" id="5.4.99.25"/>
    </reaction>
</comment>
<comment type="similarity">
    <text evidence="1">Belongs to the pseudouridine synthase TruB family. Type 1 subfamily.</text>
</comment>
<evidence type="ECO:0000255" key="1">
    <source>
        <dbReference type="HAMAP-Rule" id="MF_01080"/>
    </source>
</evidence>
<feature type="chain" id="PRO_0000121794" description="tRNA pseudouridine synthase B">
    <location>
        <begin position="1"/>
        <end position="319"/>
    </location>
</feature>
<feature type="active site" description="Nucleophile" evidence="1">
    <location>
        <position position="49"/>
    </location>
</feature>
<organism>
    <name type="scientific">Bartonella henselae (strain ATCC 49882 / DSM 28221 / CCUG 30454 / Houston 1)</name>
    <name type="common">Rochalimaea henselae</name>
    <dbReference type="NCBI Taxonomy" id="283166"/>
    <lineage>
        <taxon>Bacteria</taxon>
        <taxon>Pseudomonadati</taxon>
        <taxon>Pseudomonadota</taxon>
        <taxon>Alphaproteobacteria</taxon>
        <taxon>Hyphomicrobiales</taxon>
        <taxon>Bartonellaceae</taxon>
        <taxon>Bartonella</taxon>
    </lineage>
</organism>
<gene>
    <name evidence="1" type="primary">truB</name>
    <name type="ordered locus">BH02130</name>
</gene>
<reference key="1">
    <citation type="journal article" date="2004" name="Proc. Natl. Acad. Sci. U.S.A.">
        <title>The louse-borne human pathogen Bartonella quintana is a genomic derivative of the zoonotic agent Bartonella henselae.</title>
        <authorList>
            <person name="Alsmark U.C.M."/>
            <person name="Frank A.C."/>
            <person name="Karlberg E.O."/>
            <person name="Legault B.-A."/>
            <person name="Ardell D.H."/>
            <person name="Canbaeck B."/>
            <person name="Eriksson A.-S."/>
            <person name="Naeslund A.K."/>
            <person name="Handley S.A."/>
            <person name="Huvet M."/>
            <person name="La Scola B."/>
            <person name="Holmberg M."/>
            <person name="Andersson S.G.E."/>
        </authorList>
    </citation>
    <scope>NUCLEOTIDE SEQUENCE [LARGE SCALE GENOMIC DNA]</scope>
    <source>
        <strain>ATCC 49882 / DSM 28221 / CCUG 30454 / Houston 1</strain>
    </source>
</reference>
<proteinExistence type="inferred from homology"/>
<keyword id="KW-0413">Isomerase</keyword>
<keyword id="KW-0819">tRNA processing</keyword>
<accession>Q6G5F5</accession>
<dbReference type="EC" id="5.4.99.25" evidence="1"/>
<dbReference type="EMBL" id="BX897699">
    <property type="protein sequence ID" value="CAF27025.1"/>
    <property type="molecule type" value="Genomic_DNA"/>
</dbReference>
<dbReference type="RefSeq" id="WP_011180164.1">
    <property type="nucleotide sequence ID" value="NZ_LRIJ02000001.1"/>
</dbReference>
<dbReference type="SMR" id="Q6G5F5"/>
<dbReference type="PaxDb" id="283166-BH02130"/>
<dbReference type="EnsemblBacteria" id="CAF27025">
    <property type="protein sequence ID" value="CAF27025"/>
    <property type="gene ID" value="BH02130"/>
</dbReference>
<dbReference type="GeneID" id="92984880"/>
<dbReference type="KEGG" id="bhe:BH02130"/>
<dbReference type="eggNOG" id="COG0130">
    <property type="taxonomic scope" value="Bacteria"/>
</dbReference>
<dbReference type="OrthoDB" id="9802309at2"/>
<dbReference type="Proteomes" id="UP000000421">
    <property type="component" value="Chromosome"/>
</dbReference>
<dbReference type="GO" id="GO:0003723">
    <property type="term" value="F:RNA binding"/>
    <property type="evidence" value="ECO:0007669"/>
    <property type="project" value="InterPro"/>
</dbReference>
<dbReference type="GO" id="GO:0160148">
    <property type="term" value="F:tRNA pseudouridine(55) synthase activity"/>
    <property type="evidence" value="ECO:0007669"/>
    <property type="project" value="UniProtKB-EC"/>
</dbReference>
<dbReference type="GO" id="GO:1990481">
    <property type="term" value="P:mRNA pseudouridine synthesis"/>
    <property type="evidence" value="ECO:0007669"/>
    <property type="project" value="TreeGrafter"/>
</dbReference>
<dbReference type="GO" id="GO:0031119">
    <property type="term" value="P:tRNA pseudouridine synthesis"/>
    <property type="evidence" value="ECO:0007669"/>
    <property type="project" value="UniProtKB-UniRule"/>
</dbReference>
<dbReference type="CDD" id="cd02573">
    <property type="entry name" value="PseudoU_synth_EcTruB"/>
    <property type="match status" value="1"/>
</dbReference>
<dbReference type="Gene3D" id="3.30.2350.10">
    <property type="entry name" value="Pseudouridine synthase"/>
    <property type="match status" value="1"/>
</dbReference>
<dbReference type="HAMAP" id="MF_01080">
    <property type="entry name" value="TruB_bact"/>
    <property type="match status" value="1"/>
</dbReference>
<dbReference type="InterPro" id="IPR020103">
    <property type="entry name" value="PsdUridine_synth_cat_dom_sf"/>
</dbReference>
<dbReference type="InterPro" id="IPR002501">
    <property type="entry name" value="PsdUridine_synth_N"/>
</dbReference>
<dbReference type="InterPro" id="IPR014780">
    <property type="entry name" value="tRNA_psdUridine_synth_TruB"/>
</dbReference>
<dbReference type="InterPro" id="IPR032819">
    <property type="entry name" value="TruB_C"/>
</dbReference>
<dbReference type="NCBIfam" id="TIGR00431">
    <property type="entry name" value="TruB"/>
    <property type="match status" value="1"/>
</dbReference>
<dbReference type="PANTHER" id="PTHR13767:SF2">
    <property type="entry name" value="PSEUDOURIDYLATE SYNTHASE TRUB1"/>
    <property type="match status" value="1"/>
</dbReference>
<dbReference type="PANTHER" id="PTHR13767">
    <property type="entry name" value="TRNA-PSEUDOURIDINE SYNTHASE"/>
    <property type="match status" value="1"/>
</dbReference>
<dbReference type="Pfam" id="PF16198">
    <property type="entry name" value="TruB_C_2"/>
    <property type="match status" value="1"/>
</dbReference>
<dbReference type="Pfam" id="PF01509">
    <property type="entry name" value="TruB_N"/>
    <property type="match status" value="1"/>
</dbReference>
<dbReference type="SUPFAM" id="SSF55120">
    <property type="entry name" value="Pseudouridine synthase"/>
    <property type="match status" value="1"/>
</dbReference>
<name>TRUB_BARHE</name>